<dbReference type="EC" id="3.1.1.4"/>
<dbReference type="PIR" id="S25093">
    <property type="entry name" value="S25093"/>
</dbReference>
<dbReference type="SMR" id="P80003"/>
<dbReference type="GO" id="GO:0005576">
    <property type="term" value="C:extracellular region"/>
    <property type="evidence" value="ECO:0007669"/>
    <property type="project" value="UniProtKB-SubCell"/>
</dbReference>
<dbReference type="GO" id="GO:0046872">
    <property type="term" value="F:metal ion binding"/>
    <property type="evidence" value="ECO:0007669"/>
    <property type="project" value="UniProtKB-KW"/>
</dbReference>
<dbReference type="GO" id="GO:0004623">
    <property type="term" value="F:phospholipase A2 activity"/>
    <property type="evidence" value="ECO:0007669"/>
    <property type="project" value="UniProtKB-EC"/>
</dbReference>
<dbReference type="GO" id="GO:0050482">
    <property type="term" value="P:arachidonate secretion"/>
    <property type="evidence" value="ECO:0007669"/>
    <property type="project" value="InterPro"/>
</dbReference>
<dbReference type="GO" id="GO:0016042">
    <property type="term" value="P:lipid catabolic process"/>
    <property type="evidence" value="ECO:0007669"/>
    <property type="project" value="UniProtKB-KW"/>
</dbReference>
<dbReference type="GO" id="GO:0006644">
    <property type="term" value="P:phospholipid metabolic process"/>
    <property type="evidence" value="ECO:0007669"/>
    <property type="project" value="InterPro"/>
</dbReference>
<dbReference type="CDD" id="cd04704">
    <property type="entry name" value="PLA2_bee_venom_like"/>
    <property type="match status" value="1"/>
</dbReference>
<dbReference type="FunFam" id="1.20.90.10:FF:000002">
    <property type="entry name" value="Phospholipase A2 group III"/>
    <property type="match status" value="1"/>
</dbReference>
<dbReference type="Gene3D" id="1.20.90.10">
    <property type="entry name" value="Phospholipase A2 domain"/>
    <property type="match status" value="1"/>
</dbReference>
<dbReference type="InterPro" id="IPR016090">
    <property type="entry name" value="PLipase_A2_dom"/>
</dbReference>
<dbReference type="InterPro" id="IPR036444">
    <property type="entry name" value="PLipase_A2_dom_sf"/>
</dbReference>
<dbReference type="InterPro" id="IPR033113">
    <property type="entry name" value="PLipase_A2_His_AS"/>
</dbReference>
<dbReference type="PANTHER" id="PTHR12253">
    <property type="entry name" value="RH14732P"/>
    <property type="match status" value="1"/>
</dbReference>
<dbReference type="Pfam" id="PF05826">
    <property type="entry name" value="Phospholip_A2_2"/>
    <property type="match status" value="1"/>
</dbReference>
<dbReference type="SMART" id="SM00085">
    <property type="entry name" value="PA2c"/>
    <property type="match status" value="1"/>
</dbReference>
<dbReference type="SUPFAM" id="SSF48619">
    <property type="entry name" value="Phospholipase A2, PLA2"/>
    <property type="match status" value="1"/>
</dbReference>
<dbReference type="PROSITE" id="PS00118">
    <property type="entry name" value="PA2_HIS"/>
    <property type="match status" value="1"/>
</dbReference>
<name>PA2A2_HELSU</name>
<protein>
    <recommendedName>
        <fullName>Acidic phospholipase A2 PA4</fullName>
        <shortName>PLA2</shortName>
        <ecNumber>3.1.1.4</ecNumber>
    </recommendedName>
    <alternativeName>
        <fullName>Phosphatidylcholine 2-acylhydrolase</fullName>
    </alternativeName>
    <component>
        <recommendedName>
            <fullName>Acidic phospholipase A2 PA2</fullName>
        </recommendedName>
    </component>
</protein>
<comment type="function">
    <text>PLA2 catalyzes the calcium-dependent hydrolysis of the 2-acyl groups in 3-sn-phosphoglycerides.</text>
</comment>
<comment type="catalytic activity">
    <reaction evidence="2">
        <text>a 1,2-diacyl-sn-glycero-3-phosphocholine + H2O = a 1-acyl-sn-glycero-3-phosphocholine + a fatty acid + H(+)</text>
        <dbReference type="Rhea" id="RHEA:15801"/>
        <dbReference type="ChEBI" id="CHEBI:15377"/>
        <dbReference type="ChEBI" id="CHEBI:15378"/>
        <dbReference type="ChEBI" id="CHEBI:28868"/>
        <dbReference type="ChEBI" id="CHEBI:57643"/>
        <dbReference type="ChEBI" id="CHEBI:58168"/>
        <dbReference type="EC" id="3.1.1.4"/>
    </reaction>
</comment>
<comment type="cofactor">
    <cofactor evidence="1">
        <name>Ca(2+)</name>
        <dbReference type="ChEBI" id="CHEBI:29108"/>
    </cofactor>
    <text evidence="1">Binds 1 Ca(2+) ion per subunit.</text>
</comment>
<comment type="subcellular location">
    <subcellularLocation>
        <location>Secreted</location>
    </subcellularLocation>
</comment>
<comment type="tissue specificity">
    <text>Expressed by the venom gland.</text>
</comment>
<comment type="similarity">
    <text evidence="3">Belongs to the phospholipase A2 family. Group III subfamily.</text>
</comment>
<sequence length="142" mass="15640">GAFIMPGTLWCGAGNAASDYSQLGTEKDTDMCCRDHDHCSDTMAALEYKHGMRNYRPHTVSHCDCDNQFRSCLMNVKDRTADLVGMTYFTVLKISCFELEEGEGCVDNNFSQQCTKSEIMPVAKLVSAAPYQAQAETQSGEG</sequence>
<proteinExistence type="evidence at protein level"/>
<accession>P80003</accession>
<accession>P80006</accession>
<evidence type="ECO:0000250" key="1"/>
<evidence type="ECO:0000255" key="2">
    <source>
        <dbReference type="PROSITE-ProRule" id="PRU10035"/>
    </source>
</evidence>
<evidence type="ECO:0000305" key="3"/>
<reference key="1">
    <citation type="journal article" date="1991" name="Eur. J. Biochem.">
        <title>Differences in primary structure among five phospholipases A2 from Heloderma suspectum.</title>
        <authorList>
            <person name="Vandermeers A."/>
            <person name="Vandermeers-Piret M.-C."/>
            <person name="Vigneron L."/>
            <person name="Rathe J."/>
            <person name="Stievenart M."/>
            <person name="Christophe J."/>
        </authorList>
    </citation>
    <scope>PROTEIN SEQUENCE</scope>
    <source>
        <tissue>Venom</tissue>
    </source>
</reference>
<keyword id="KW-0106">Calcium</keyword>
<keyword id="KW-0903">Direct protein sequencing</keyword>
<keyword id="KW-1015">Disulfide bond</keyword>
<keyword id="KW-0378">Hydrolase</keyword>
<keyword id="KW-0442">Lipid degradation</keyword>
<keyword id="KW-0443">Lipid metabolism</keyword>
<keyword id="KW-0479">Metal-binding</keyword>
<keyword id="KW-0964">Secreted</keyword>
<feature type="chain" id="PRO_0000045885" description="Acidic phospholipase A2 PA4">
    <location>
        <begin position="1"/>
        <end position="142"/>
    </location>
</feature>
<feature type="chain" id="PRO_0000045886" description="Acidic phospholipase A2 PA2">
    <location>
        <begin position="1"/>
        <end position="141"/>
    </location>
</feature>
<feature type="active site" evidence="2">
    <location>
        <position position="36"/>
    </location>
</feature>
<feature type="binding site" evidence="1">
    <location>
        <position position="10"/>
    </location>
    <ligand>
        <name>Ca(2+)</name>
        <dbReference type="ChEBI" id="CHEBI:29108"/>
    </ligand>
</feature>
<feature type="binding site" evidence="1">
    <location>
        <position position="12"/>
    </location>
    <ligand>
        <name>Ca(2+)</name>
        <dbReference type="ChEBI" id="CHEBI:29108"/>
    </ligand>
</feature>
<feature type="binding site" evidence="1">
    <location>
        <position position="14"/>
    </location>
    <ligand>
        <name>Ca(2+)</name>
        <dbReference type="ChEBI" id="CHEBI:29108"/>
    </ligand>
</feature>
<feature type="binding site" evidence="1">
    <location>
        <position position="37"/>
    </location>
    <ligand>
        <name>Ca(2+)</name>
        <dbReference type="ChEBI" id="CHEBI:29108"/>
    </ligand>
</feature>
<feature type="disulfide bond" evidence="1">
    <location>
        <begin position="11"/>
        <end position="33"/>
    </location>
</feature>
<feature type="disulfide bond" evidence="1">
    <location>
        <begin position="32"/>
        <end position="72"/>
    </location>
</feature>
<feature type="disulfide bond" evidence="1">
    <location>
        <begin position="39"/>
        <end position="65"/>
    </location>
</feature>
<organism>
    <name type="scientific">Heloderma suspectum</name>
    <name type="common">Gila monster</name>
    <dbReference type="NCBI Taxonomy" id="8554"/>
    <lineage>
        <taxon>Eukaryota</taxon>
        <taxon>Metazoa</taxon>
        <taxon>Chordata</taxon>
        <taxon>Craniata</taxon>
        <taxon>Vertebrata</taxon>
        <taxon>Euteleostomi</taxon>
        <taxon>Lepidosauria</taxon>
        <taxon>Squamata</taxon>
        <taxon>Bifurcata</taxon>
        <taxon>Unidentata</taxon>
        <taxon>Episquamata</taxon>
        <taxon>Toxicofera</taxon>
        <taxon>Anguimorpha</taxon>
        <taxon>Neoanguimorpha</taxon>
        <taxon>Helodermatidae</taxon>
        <taxon>Heloderma</taxon>
    </lineage>
</organism>